<protein>
    <recommendedName>
        <fullName evidence="1">UPF0178 protein YaiI</fullName>
    </recommendedName>
</protein>
<evidence type="ECO:0000255" key="1">
    <source>
        <dbReference type="HAMAP-Rule" id="MF_00489"/>
    </source>
</evidence>
<organism>
    <name type="scientific">Shigella boydii serotype 18 (strain CDC 3083-94 / BS512)</name>
    <dbReference type="NCBI Taxonomy" id="344609"/>
    <lineage>
        <taxon>Bacteria</taxon>
        <taxon>Pseudomonadati</taxon>
        <taxon>Pseudomonadota</taxon>
        <taxon>Gammaproteobacteria</taxon>
        <taxon>Enterobacterales</taxon>
        <taxon>Enterobacteriaceae</taxon>
        <taxon>Shigella</taxon>
    </lineage>
</organism>
<reference key="1">
    <citation type="submission" date="2008-05" db="EMBL/GenBank/DDBJ databases">
        <title>Complete sequence of Shigella boydii serotype 18 strain BS512.</title>
        <authorList>
            <person name="Rasko D.A."/>
            <person name="Rosovitz M."/>
            <person name="Maurelli A.T."/>
            <person name="Myers G."/>
            <person name="Seshadri R."/>
            <person name="Cer R."/>
            <person name="Jiang L."/>
            <person name="Ravel J."/>
            <person name="Sebastian Y."/>
        </authorList>
    </citation>
    <scope>NUCLEOTIDE SEQUENCE [LARGE SCALE GENOMIC DNA]</scope>
    <source>
        <strain>CDC 3083-94 / BS512</strain>
    </source>
</reference>
<dbReference type="EMBL" id="CP001063">
    <property type="protein sequence ID" value="ACD07121.1"/>
    <property type="molecule type" value="Genomic_DNA"/>
</dbReference>
<dbReference type="RefSeq" id="WP_000158149.1">
    <property type="nucleotide sequence ID" value="NC_010658.1"/>
</dbReference>
<dbReference type="STRING" id="344609.SbBS512_E0304"/>
<dbReference type="KEGG" id="sbc:SbBS512_E0304"/>
<dbReference type="HOGENOM" id="CLU_106619_2_1_6"/>
<dbReference type="Proteomes" id="UP000001030">
    <property type="component" value="Chromosome"/>
</dbReference>
<dbReference type="CDD" id="cd18720">
    <property type="entry name" value="PIN_YqxD-like"/>
    <property type="match status" value="1"/>
</dbReference>
<dbReference type="HAMAP" id="MF_00489">
    <property type="entry name" value="UPF0178"/>
    <property type="match status" value="1"/>
</dbReference>
<dbReference type="InterPro" id="IPR003791">
    <property type="entry name" value="UPF0178"/>
</dbReference>
<dbReference type="NCBIfam" id="NF001095">
    <property type="entry name" value="PRK00124.1"/>
    <property type="match status" value="1"/>
</dbReference>
<dbReference type="PANTHER" id="PTHR35146">
    <property type="entry name" value="UPF0178 PROTEIN YAII"/>
    <property type="match status" value="1"/>
</dbReference>
<dbReference type="PANTHER" id="PTHR35146:SF1">
    <property type="entry name" value="UPF0178 PROTEIN YAII"/>
    <property type="match status" value="1"/>
</dbReference>
<dbReference type="Pfam" id="PF02639">
    <property type="entry name" value="DUF188"/>
    <property type="match status" value="1"/>
</dbReference>
<feature type="chain" id="PRO_1000126216" description="UPF0178 protein YaiI">
    <location>
        <begin position="1"/>
        <end position="152"/>
    </location>
</feature>
<sequence length="152" mass="16950">MTIWVDADACPNVIKEILYRAAERMQMPLVLVANQSLRVPPSRFIRTLHVAAGFDVADNEIVRQCEAGDLVITADIPLAAEAIEKGAAALNPRGERYTPATIRERLTMRDFMDTLRASGIQTGGPDSLSQRDRQAFAAELEKWWLEVQRSRG</sequence>
<comment type="similarity">
    <text evidence="1">Belongs to the UPF0178 family.</text>
</comment>
<gene>
    <name evidence="1" type="primary">yaiI</name>
    <name type="ordered locus">SbBS512_E0304</name>
</gene>
<accession>B2U3Y9</accession>
<keyword id="KW-1185">Reference proteome</keyword>
<proteinExistence type="inferred from homology"/>
<name>YAII_SHIB3</name>